<comment type="function">
    <text evidence="1">Catalyzes the reduction of the glycolytic intermediate dihydroxyacetone phosphate (DHAP) to sn-glycerol 3-phosphate (G3P), the key precursor for phospholipid synthesis.</text>
</comment>
<comment type="catalytic activity">
    <reaction evidence="1">
        <text>sn-glycerol 3-phosphate + NAD(+) = dihydroxyacetone phosphate + NADH + H(+)</text>
        <dbReference type="Rhea" id="RHEA:11092"/>
        <dbReference type="ChEBI" id="CHEBI:15378"/>
        <dbReference type="ChEBI" id="CHEBI:57540"/>
        <dbReference type="ChEBI" id="CHEBI:57597"/>
        <dbReference type="ChEBI" id="CHEBI:57642"/>
        <dbReference type="ChEBI" id="CHEBI:57945"/>
        <dbReference type="EC" id="1.1.1.94"/>
    </reaction>
    <physiologicalReaction direction="right-to-left" evidence="1">
        <dbReference type="Rhea" id="RHEA:11094"/>
    </physiologicalReaction>
</comment>
<comment type="catalytic activity">
    <reaction evidence="1">
        <text>sn-glycerol 3-phosphate + NADP(+) = dihydroxyacetone phosphate + NADPH + H(+)</text>
        <dbReference type="Rhea" id="RHEA:11096"/>
        <dbReference type="ChEBI" id="CHEBI:15378"/>
        <dbReference type="ChEBI" id="CHEBI:57597"/>
        <dbReference type="ChEBI" id="CHEBI:57642"/>
        <dbReference type="ChEBI" id="CHEBI:57783"/>
        <dbReference type="ChEBI" id="CHEBI:58349"/>
        <dbReference type="EC" id="1.1.1.94"/>
    </reaction>
    <physiologicalReaction direction="right-to-left" evidence="1">
        <dbReference type="Rhea" id="RHEA:11098"/>
    </physiologicalReaction>
</comment>
<comment type="pathway">
    <text evidence="1">Membrane lipid metabolism; glycerophospholipid metabolism.</text>
</comment>
<comment type="subcellular location">
    <subcellularLocation>
        <location evidence="1">Cytoplasm</location>
    </subcellularLocation>
</comment>
<comment type="similarity">
    <text evidence="1">Belongs to the NAD-dependent glycerol-3-phosphate dehydrogenase family.</text>
</comment>
<feature type="chain" id="PRO_0000255334" description="Glycerol-3-phosphate dehydrogenase [NAD(P)+]">
    <location>
        <begin position="1"/>
        <end position="329"/>
    </location>
</feature>
<feature type="active site" description="Proton acceptor" evidence="1">
    <location>
        <position position="189"/>
    </location>
</feature>
<feature type="binding site" evidence="1">
    <location>
        <position position="10"/>
    </location>
    <ligand>
        <name>NADPH</name>
        <dbReference type="ChEBI" id="CHEBI:57783"/>
    </ligand>
</feature>
<feature type="binding site" evidence="1">
    <location>
        <position position="11"/>
    </location>
    <ligand>
        <name>NADPH</name>
        <dbReference type="ChEBI" id="CHEBI:57783"/>
    </ligand>
</feature>
<feature type="binding site" evidence="1">
    <location>
        <position position="31"/>
    </location>
    <ligand>
        <name>NADPH</name>
        <dbReference type="ChEBI" id="CHEBI:57783"/>
    </ligand>
</feature>
<feature type="binding site" evidence="1">
    <location>
        <position position="105"/>
    </location>
    <ligand>
        <name>NADPH</name>
        <dbReference type="ChEBI" id="CHEBI:57783"/>
    </ligand>
</feature>
<feature type="binding site" evidence="1">
    <location>
        <position position="105"/>
    </location>
    <ligand>
        <name>sn-glycerol 3-phosphate</name>
        <dbReference type="ChEBI" id="CHEBI:57597"/>
    </ligand>
</feature>
<feature type="binding site" evidence="1">
    <location>
        <position position="134"/>
    </location>
    <ligand>
        <name>sn-glycerol 3-phosphate</name>
        <dbReference type="ChEBI" id="CHEBI:57597"/>
    </ligand>
</feature>
<feature type="binding site" evidence="1">
    <location>
        <position position="136"/>
    </location>
    <ligand>
        <name>sn-glycerol 3-phosphate</name>
        <dbReference type="ChEBI" id="CHEBI:57597"/>
    </ligand>
</feature>
<feature type="binding site" evidence="1">
    <location>
        <position position="138"/>
    </location>
    <ligand>
        <name>NADPH</name>
        <dbReference type="ChEBI" id="CHEBI:57783"/>
    </ligand>
</feature>
<feature type="binding site" evidence="1">
    <location>
        <position position="189"/>
    </location>
    <ligand>
        <name>sn-glycerol 3-phosphate</name>
        <dbReference type="ChEBI" id="CHEBI:57597"/>
    </ligand>
</feature>
<feature type="binding site" evidence="1">
    <location>
        <position position="242"/>
    </location>
    <ligand>
        <name>sn-glycerol 3-phosphate</name>
        <dbReference type="ChEBI" id="CHEBI:57597"/>
    </ligand>
</feature>
<feature type="binding site" evidence="1">
    <location>
        <position position="252"/>
    </location>
    <ligand>
        <name>sn-glycerol 3-phosphate</name>
        <dbReference type="ChEBI" id="CHEBI:57597"/>
    </ligand>
</feature>
<feature type="binding site" evidence="1">
    <location>
        <position position="253"/>
    </location>
    <ligand>
        <name>NADPH</name>
        <dbReference type="ChEBI" id="CHEBI:57783"/>
    </ligand>
</feature>
<feature type="binding site" evidence="1">
    <location>
        <position position="253"/>
    </location>
    <ligand>
        <name>sn-glycerol 3-phosphate</name>
        <dbReference type="ChEBI" id="CHEBI:57597"/>
    </ligand>
</feature>
<feature type="binding site" evidence="1">
    <location>
        <position position="254"/>
    </location>
    <ligand>
        <name>sn-glycerol 3-phosphate</name>
        <dbReference type="ChEBI" id="CHEBI:57597"/>
    </ligand>
</feature>
<feature type="binding site" evidence="1">
    <location>
        <position position="277"/>
    </location>
    <ligand>
        <name>NADPH</name>
        <dbReference type="ChEBI" id="CHEBI:57783"/>
    </ligand>
</feature>
<feature type="binding site" evidence="1">
    <location>
        <position position="279"/>
    </location>
    <ligand>
        <name>NADPH</name>
        <dbReference type="ChEBI" id="CHEBI:57783"/>
    </ligand>
</feature>
<gene>
    <name evidence="1" type="primary">gpsA</name>
    <name type="ordered locus">NGO_2021</name>
</gene>
<proteinExistence type="inferred from homology"/>
<accession>Q5F5A8</accession>
<protein>
    <recommendedName>
        <fullName evidence="1">Glycerol-3-phosphate dehydrogenase [NAD(P)+]</fullName>
        <ecNumber evidence="1">1.1.1.94</ecNumber>
    </recommendedName>
    <alternativeName>
        <fullName evidence="1">NAD(P)(+)-dependent glycerol-3-phosphate dehydrogenase</fullName>
    </alternativeName>
    <alternativeName>
        <fullName evidence="1">NAD(P)H-dependent dihydroxyacetone-phosphate reductase</fullName>
    </alternativeName>
</protein>
<sequence>MKITVIGAGSWGTALALHFSQHGNRVSLWTRNADQVRQMQEARENKRGLPGFSFPETLEVCADLAEALKDSGLVLIVTSVAGLRSSAELLKQYGAGHLPVLAACKGFEQDTGLLTFQVLKEVLPDNKKIGVLSGPSFAQELAKQLPCAVVLASENQEWIEELVPQLNTTVMRLYGSTDVIGVAVGGSVKNVMAIATGLSDGLEYGLNARAALVTRGLAEITRLASAMGAQPKTMMGLAGIGDLILTCTGALSRNRRVGLGLAEGKELHQVLVEIGHVSEGVSTIEEVFNTACKYQIDMPITQTLLQLIRKEMTPQQVVERLMERSARFE</sequence>
<organism>
    <name type="scientific">Neisseria gonorrhoeae (strain ATCC 700825 / FA 1090)</name>
    <dbReference type="NCBI Taxonomy" id="242231"/>
    <lineage>
        <taxon>Bacteria</taxon>
        <taxon>Pseudomonadati</taxon>
        <taxon>Pseudomonadota</taxon>
        <taxon>Betaproteobacteria</taxon>
        <taxon>Neisseriales</taxon>
        <taxon>Neisseriaceae</taxon>
        <taxon>Neisseria</taxon>
    </lineage>
</organism>
<keyword id="KW-0963">Cytoplasm</keyword>
<keyword id="KW-0444">Lipid biosynthesis</keyword>
<keyword id="KW-0443">Lipid metabolism</keyword>
<keyword id="KW-0520">NAD</keyword>
<keyword id="KW-0521">NADP</keyword>
<keyword id="KW-0547">Nucleotide-binding</keyword>
<keyword id="KW-0560">Oxidoreductase</keyword>
<keyword id="KW-0594">Phospholipid biosynthesis</keyword>
<keyword id="KW-1208">Phospholipid metabolism</keyword>
<keyword id="KW-1185">Reference proteome</keyword>
<evidence type="ECO:0000255" key="1">
    <source>
        <dbReference type="HAMAP-Rule" id="MF_00394"/>
    </source>
</evidence>
<name>GPDA_NEIG1</name>
<reference key="1">
    <citation type="submission" date="2003-03" db="EMBL/GenBank/DDBJ databases">
        <title>The complete genome sequence of Neisseria gonorrhoeae.</title>
        <authorList>
            <person name="Lewis L.A."/>
            <person name="Gillaspy A.F."/>
            <person name="McLaughlin R.E."/>
            <person name="Gipson M."/>
            <person name="Ducey T.F."/>
            <person name="Ownbey T."/>
            <person name="Hartman K."/>
            <person name="Nydick C."/>
            <person name="Carson M.B."/>
            <person name="Vaughn J."/>
            <person name="Thomson C."/>
            <person name="Song L."/>
            <person name="Lin S."/>
            <person name="Yuan X."/>
            <person name="Najar F."/>
            <person name="Zhan M."/>
            <person name="Ren Q."/>
            <person name="Zhu H."/>
            <person name="Qi S."/>
            <person name="Kenton S.M."/>
            <person name="Lai H."/>
            <person name="White J.D."/>
            <person name="Clifton S."/>
            <person name="Roe B.A."/>
            <person name="Dyer D.W."/>
        </authorList>
    </citation>
    <scope>NUCLEOTIDE SEQUENCE [LARGE SCALE GENOMIC DNA]</scope>
    <source>
        <strain>ATCC 700825 / FA 1090</strain>
    </source>
</reference>
<dbReference type="EC" id="1.1.1.94" evidence="1"/>
<dbReference type="EMBL" id="AE004969">
    <property type="protein sequence ID" value="AAW90629.1"/>
    <property type="molecule type" value="Genomic_DNA"/>
</dbReference>
<dbReference type="RefSeq" id="WP_003686938.1">
    <property type="nucleotide sequence ID" value="NC_002946.2"/>
</dbReference>
<dbReference type="RefSeq" id="YP_209041.1">
    <property type="nucleotide sequence ID" value="NC_002946.2"/>
</dbReference>
<dbReference type="SMR" id="Q5F5A8"/>
<dbReference type="STRING" id="242231.NGO_2021"/>
<dbReference type="KEGG" id="ngo:NGO_2021"/>
<dbReference type="PATRIC" id="fig|242231.10.peg.2436"/>
<dbReference type="HOGENOM" id="CLU_033449_0_2_4"/>
<dbReference type="UniPathway" id="UPA00940"/>
<dbReference type="Proteomes" id="UP000000535">
    <property type="component" value="Chromosome"/>
</dbReference>
<dbReference type="GO" id="GO:0005829">
    <property type="term" value="C:cytosol"/>
    <property type="evidence" value="ECO:0007669"/>
    <property type="project" value="TreeGrafter"/>
</dbReference>
<dbReference type="GO" id="GO:0047952">
    <property type="term" value="F:glycerol-3-phosphate dehydrogenase [NAD(P)+] activity"/>
    <property type="evidence" value="ECO:0007669"/>
    <property type="project" value="UniProtKB-UniRule"/>
</dbReference>
<dbReference type="GO" id="GO:0051287">
    <property type="term" value="F:NAD binding"/>
    <property type="evidence" value="ECO:0007669"/>
    <property type="project" value="InterPro"/>
</dbReference>
<dbReference type="GO" id="GO:0005975">
    <property type="term" value="P:carbohydrate metabolic process"/>
    <property type="evidence" value="ECO:0007669"/>
    <property type="project" value="InterPro"/>
</dbReference>
<dbReference type="GO" id="GO:0046167">
    <property type="term" value="P:glycerol-3-phosphate biosynthetic process"/>
    <property type="evidence" value="ECO:0007669"/>
    <property type="project" value="UniProtKB-UniRule"/>
</dbReference>
<dbReference type="GO" id="GO:0046168">
    <property type="term" value="P:glycerol-3-phosphate catabolic process"/>
    <property type="evidence" value="ECO:0007669"/>
    <property type="project" value="InterPro"/>
</dbReference>
<dbReference type="GO" id="GO:0006650">
    <property type="term" value="P:glycerophospholipid metabolic process"/>
    <property type="evidence" value="ECO:0007669"/>
    <property type="project" value="UniProtKB-UniRule"/>
</dbReference>
<dbReference type="GO" id="GO:0008654">
    <property type="term" value="P:phospholipid biosynthetic process"/>
    <property type="evidence" value="ECO:0007669"/>
    <property type="project" value="UniProtKB-KW"/>
</dbReference>
<dbReference type="FunFam" id="1.10.1040.10:FF:000001">
    <property type="entry name" value="Glycerol-3-phosphate dehydrogenase [NAD(P)+]"/>
    <property type="match status" value="1"/>
</dbReference>
<dbReference type="FunFam" id="3.40.50.720:FF:000019">
    <property type="entry name" value="Glycerol-3-phosphate dehydrogenase [NAD(P)+]"/>
    <property type="match status" value="1"/>
</dbReference>
<dbReference type="Gene3D" id="1.10.1040.10">
    <property type="entry name" value="N-(1-d-carboxylethyl)-l-norvaline Dehydrogenase, domain 2"/>
    <property type="match status" value="1"/>
</dbReference>
<dbReference type="Gene3D" id="3.40.50.720">
    <property type="entry name" value="NAD(P)-binding Rossmann-like Domain"/>
    <property type="match status" value="1"/>
</dbReference>
<dbReference type="HAMAP" id="MF_00394">
    <property type="entry name" value="NAD_Glyc3P_dehydrog"/>
    <property type="match status" value="1"/>
</dbReference>
<dbReference type="InterPro" id="IPR008927">
    <property type="entry name" value="6-PGluconate_DH-like_C_sf"/>
</dbReference>
<dbReference type="InterPro" id="IPR013328">
    <property type="entry name" value="6PGD_dom2"/>
</dbReference>
<dbReference type="InterPro" id="IPR006168">
    <property type="entry name" value="G3P_DH_NAD-dep"/>
</dbReference>
<dbReference type="InterPro" id="IPR006109">
    <property type="entry name" value="G3P_DH_NAD-dep_C"/>
</dbReference>
<dbReference type="InterPro" id="IPR011128">
    <property type="entry name" value="G3P_DH_NAD-dep_N"/>
</dbReference>
<dbReference type="InterPro" id="IPR036291">
    <property type="entry name" value="NAD(P)-bd_dom_sf"/>
</dbReference>
<dbReference type="NCBIfam" id="NF000940">
    <property type="entry name" value="PRK00094.1-2"/>
    <property type="match status" value="1"/>
</dbReference>
<dbReference type="NCBIfam" id="NF000942">
    <property type="entry name" value="PRK00094.1-4"/>
    <property type="match status" value="1"/>
</dbReference>
<dbReference type="PANTHER" id="PTHR11728">
    <property type="entry name" value="GLYCEROL-3-PHOSPHATE DEHYDROGENASE"/>
    <property type="match status" value="1"/>
</dbReference>
<dbReference type="PANTHER" id="PTHR11728:SF1">
    <property type="entry name" value="GLYCEROL-3-PHOSPHATE DEHYDROGENASE [NAD(+)] 2, CHLOROPLASTIC"/>
    <property type="match status" value="1"/>
</dbReference>
<dbReference type="Pfam" id="PF07479">
    <property type="entry name" value="NAD_Gly3P_dh_C"/>
    <property type="match status" value="1"/>
</dbReference>
<dbReference type="Pfam" id="PF01210">
    <property type="entry name" value="NAD_Gly3P_dh_N"/>
    <property type="match status" value="1"/>
</dbReference>
<dbReference type="PIRSF" id="PIRSF000114">
    <property type="entry name" value="Glycerol-3-P_dh"/>
    <property type="match status" value="1"/>
</dbReference>
<dbReference type="PRINTS" id="PR00077">
    <property type="entry name" value="GPDHDRGNASE"/>
</dbReference>
<dbReference type="SUPFAM" id="SSF48179">
    <property type="entry name" value="6-phosphogluconate dehydrogenase C-terminal domain-like"/>
    <property type="match status" value="1"/>
</dbReference>
<dbReference type="SUPFAM" id="SSF51735">
    <property type="entry name" value="NAD(P)-binding Rossmann-fold domains"/>
    <property type="match status" value="1"/>
</dbReference>
<dbReference type="PROSITE" id="PS00957">
    <property type="entry name" value="NAD_G3PDH"/>
    <property type="match status" value="1"/>
</dbReference>